<accession>Q16643</accession>
<accession>A8MV58</accession>
<accession>B2RBG0</accession>
<accession>Q9UFZ5</accession>
<feature type="initiator methionine" description="Removed" evidence="4 14 19">
    <location>
        <position position="1"/>
    </location>
</feature>
<feature type="chain" id="PRO_0000080008" description="Drebrin">
    <location>
        <begin position="2"/>
        <end position="649"/>
    </location>
</feature>
<feature type="domain" description="ADF-H" evidence="2">
    <location>
        <begin position="3"/>
        <end position="134"/>
    </location>
</feature>
<feature type="region of interest" description="Disordered" evidence="3">
    <location>
        <begin position="208"/>
        <end position="420"/>
    </location>
</feature>
<feature type="region of interest" description="Disordered" evidence="3">
    <location>
        <begin position="477"/>
        <end position="502"/>
    </location>
</feature>
<feature type="region of interest" description="Disordered" evidence="3">
    <location>
        <begin position="538"/>
        <end position="620"/>
    </location>
</feature>
<feature type="compositionally biased region" description="Basic and acidic residues" evidence="3">
    <location>
        <begin position="208"/>
        <end position="236"/>
    </location>
</feature>
<feature type="compositionally biased region" description="Basic and acidic residues" evidence="3">
    <location>
        <begin position="288"/>
        <end position="298"/>
    </location>
</feature>
<feature type="compositionally biased region" description="Polar residues" evidence="3">
    <location>
        <begin position="334"/>
        <end position="348"/>
    </location>
</feature>
<feature type="compositionally biased region" description="Pro residues" evidence="3">
    <location>
        <begin position="363"/>
        <end position="374"/>
    </location>
</feature>
<feature type="compositionally biased region" description="Polar residues" evidence="3">
    <location>
        <begin position="582"/>
        <end position="594"/>
    </location>
</feature>
<feature type="modified residue" description="N-acetylalanine" evidence="4 14 19">
    <location>
        <position position="2"/>
    </location>
</feature>
<feature type="modified residue" description="Phosphoserine" evidence="21 22 23">
    <location>
        <position position="141"/>
    </location>
</feature>
<feature type="modified residue" description="Phosphoserine" evidence="14 18 21 22 23">
    <location>
        <position position="142"/>
    </location>
</feature>
<feature type="modified residue" description="Phosphothreonine" evidence="18 20 23">
    <location>
        <position position="331"/>
    </location>
</feature>
<feature type="modified residue" description="Phosphothreonine" evidence="18">
    <location>
        <position position="335"/>
    </location>
</feature>
<feature type="modified residue" description="Phosphoserine" evidence="18 22 23">
    <location>
        <position position="337"/>
    </location>
</feature>
<feature type="modified residue" description="Phosphoserine" evidence="22 23">
    <location>
        <position position="339"/>
    </location>
</feature>
<feature type="modified residue" description="Phosphoserine" evidence="1">
    <location>
        <position position="345"/>
    </location>
</feature>
<feature type="modified residue" description="Phosphothreonine" evidence="18 20 23">
    <location>
        <position position="346"/>
    </location>
</feature>
<feature type="modified residue" description="Phosphoserine" evidence="24">
    <location>
        <position position="416"/>
    </location>
</feature>
<feature type="modified residue" description="Phosphothreonine" evidence="24">
    <location>
        <position position="497"/>
    </location>
</feature>
<feature type="modified residue" description="Phosphoserine" evidence="1">
    <location>
        <position position="601"/>
    </location>
</feature>
<feature type="splice variant" id="VSP_028175" description="In isoform 2." evidence="16">
    <original>VSFSGHRLELLAAYEEVIREESAADW</original>
    <variation>HPWHGTAALASSQAWRDGRERQALVSCR</variation>
    <location>
        <begin position="4"/>
        <end position="29"/>
    </location>
</feature>
<feature type="splice variant" id="VSP_053443" description="In isoform 3." evidence="15">
    <original>G</original>
    <variation>GRPYCPFIKASDSGPSSSSSSSSSPPRTPFPYITCHRTPNLSSSLPC</variation>
    <location>
        <position position="319"/>
    </location>
</feature>
<feature type="sequence variant" id="VAR_035910" description="In a breast cancer sample; somatic mutation." evidence="6">
    <original>E</original>
    <variation>K</variation>
    <location>
        <position position="278"/>
    </location>
</feature>
<feature type="sequence variant" id="VAR_047365" description="In dbSNP:rs2544809." evidence="5 7 11 13">
    <original>I</original>
    <variation>V</variation>
    <location>
        <position position="446"/>
    </location>
</feature>
<feature type="sequence variant" id="VAR_047366" description="In dbSNP:rs28538572." evidence="5 7 11 13">
    <original>S</original>
    <variation>P</variation>
    <location>
        <position position="553"/>
    </location>
</feature>
<feature type="sequence variant" id="VAR_035911" description="In a breast cancer sample; somatic mutation." evidence="6">
    <original>E</original>
    <variation>Q</variation>
    <location>
        <position position="640"/>
    </location>
</feature>
<feature type="mutagenesis site" description="Loss of binding to ZMYND8. Loss of ZMYND8 cytoplasmic localization." evidence="9">
    <original>R</original>
    <variation>D</variation>
    <variation>G</variation>
    <location>
        <position position="10"/>
    </location>
</feature>
<feature type="mutagenesis site" description="Decreased binding to ZMYND8." evidence="9">
    <original>C</original>
    <variation>Q</variation>
    <location>
        <position position="96"/>
    </location>
</feature>
<feature type="helix" evidence="25">
    <location>
        <begin position="10"/>
        <end position="21"/>
    </location>
</feature>
<feature type="strand" evidence="25">
    <location>
        <begin position="23"/>
        <end position="26"/>
    </location>
</feature>
<feature type="strand" evidence="25">
    <location>
        <begin position="29"/>
        <end position="34"/>
    </location>
</feature>
<feature type="strand" evidence="25">
    <location>
        <begin position="40"/>
        <end position="49"/>
    </location>
</feature>
<feature type="helix" evidence="25">
    <location>
        <begin position="50"/>
        <end position="54"/>
    </location>
</feature>
<feature type="helix" evidence="25">
    <location>
        <begin position="55"/>
        <end position="57"/>
    </location>
</feature>
<feature type="strand" evidence="25">
    <location>
        <begin position="62"/>
        <end position="70"/>
    </location>
</feature>
<feature type="strand" evidence="25">
    <location>
        <begin position="72"/>
        <end position="74"/>
    </location>
</feature>
<feature type="strand" evidence="25">
    <location>
        <begin position="79"/>
        <end position="86"/>
    </location>
</feature>
<feature type="helix" evidence="25">
    <location>
        <begin position="92"/>
        <end position="99"/>
    </location>
</feature>
<feature type="helix" evidence="25">
    <location>
        <begin position="102"/>
        <end position="108"/>
    </location>
</feature>
<feature type="strand" evidence="25">
    <location>
        <begin position="114"/>
        <end position="120"/>
    </location>
</feature>
<feature type="helix" evidence="25">
    <location>
        <begin position="121"/>
        <end position="123"/>
    </location>
</feature>
<feature type="helix" evidence="25">
    <location>
        <begin position="126"/>
        <end position="132"/>
    </location>
</feature>
<feature type="helix" evidence="26">
    <location>
        <begin position="541"/>
        <end position="543"/>
    </location>
</feature>
<name>DREB_HUMAN</name>
<organism>
    <name type="scientific">Homo sapiens</name>
    <name type="common">Human</name>
    <dbReference type="NCBI Taxonomy" id="9606"/>
    <lineage>
        <taxon>Eukaryota</taxon>
        <taxon>Metazoa</taxon>
        <taxon>Chordata</taxon>
        <taxon>Craniata</taxon>
        <taxon>Vertebrata</taxon>
        <taxon>Euteleostomi</taxon>
        <taxon>Mammalia</taxon>
        <taxon>Eutheria</taxon>
        <taxon>Euarchontoglires</taxon>
        <taxon>Primates</taxon>
        <taxon>Haplorrhini</taxon>
        <taxon>Catarrhini</taxon>
        <taxon>Hominidae</taxon>
        <taxon>Homo</taxon>
    </lineage>
</organism>
<sequence length="649" mass="71429">MAGVSFSGHRLELLAAYEEVIREESAADWALYTYEDGSDDLKLAASGEGGLQELSGHFENQKVMYGFCSVKDSQAALPKYVLINWVGEDVPDARKCACASHVAKVAEFFQGVDVIVNASSVEDIDAGAIGQRLSNGLARLSSPVLHRLRLREDENAEPVGTTYQKTDAAVEMKRINREQFWEQAKKEEELRKEEERKKALDERLRFEQERMEQERQEQEERERRYREREQQIEEHRRKQQTLEAEEAKRRLKEQSIFGDHRDEEEETHMKKSESEVEEAAAIIAQRPDNPREFFKQQERVASASAGSCDVPSPFNHRPGSHLDSHRRMAPTPIPTRSPSDSSTASTPVAEQIERALDEVTSSQPPPLPPPPPPAQETQEPSPILDSEETRAAAPQAWAGPMEEPPQAQAPPRGPGSPAEDLMFMESAEQAVLAAPVEPATADATEIHDAADTIETDTATADTTVANNVPPAATSLIDLWPGNGEGASTLQGEPRAPTPPSGTEVTLAEVPLLDEVAPEPLLPAGEGCATLLNFDELPEPPATFCDPEEVEGESLAAPQTPTLPSALEELEQEQEPEPHLLTNGETTQKEGTQASEGYFSQSQEEEFAQSEELCAKAPPPVFYNKPPEIDITCWDADPVPEEEEGFEGGD</sequence>
<comment type="function">
    <text evidence="1 8">Actin cytoskeleton-organizing protein that plays a role in the formation of cell projections (PubMed:20215400). Required for actin polymerization at immunological synapses (IS) and for the recruitment of the chemokine receptor CXCR4 to IS (PubMed:20215400). Plays a role in dendritic spine morphogenesis and organization, including the localization of the dopamine receptor DRD1 to the dendritic spines (By similarity). Involved in memory-related synaptic plasticity in the hippocampus (By similarity).</text>
</comment>
<comment type="subunit">
    <text evidence="1 8 9 10">Interacts with RUFY3 (By similarity). Interacts with CXCR4; this interaction is enhanced by antigenic stimulation (PubMed:20215400). Interacts (via ADF-H domain) with ZMYND8 (via N-terminus); the interaction leads to sequestering of ZMYND8 in the cytoplasm (PubMed:28966017, PubMed:35916866).</text>
</comment>
<comment type="interaction">
    <interactant intactId="EBI-351394">
        <id>Q16643</id>
    </interactant>
    <interactant intactId="EBI-365875">
        <id>P55196</id>
        <label>AFDN</label>
    </interactant>
    <organismsDiffer>false</organismsDiffer>
    <experiments>4</experiments>
</comment>
<comment type="interaction">
    <interactant intactId="EBI-351394">
        <id>Q16643</id>
    </interactant>
    <interactant intactId="EBI-489411">
        <id>P61073</id>
        <label>CXCR4</label>
    </interactant>
    <organismsDiffer>false</organismsDiffer>
    <experiments>5</experiments>
</comment>
<comment type="interaction">
    <interactant intactId="EBI-351394">
        <id>Q16643</id>
    </interactant>
    <interactant intactId="EBI-8757328">
        <id>Q16643-1</id>
        <label>DBN1</label>
    </interactant>
    <organismsDiffer>false</organismsDiffer>
    <experiments>2</experiments>
</comment>
<comment type="interaction">
    <interactant intactId="EBI-351394">
        <id>Q16643</id>
    </interactant>
    <interactant intactId="EBI-401755">
        <id>P62993</id>
        <label>GRB2</label>
    </interactant>
    <organismsDiffer>false</organismsDiffer>
    <experiments>4</experiments>
</comment>
<comment type="interaction">
    <interactant intactId="EBI-351394">
        <id>Q16643</id>
    </interactant>
    <interactant intactId="EBI-747754">
        <id>P28799</id>
        <label>GRN</label>
    </interactant>
    <organismsDiffer>false</organismsDiffer>
    <experiments>5</experiments>
</comment>
<comment type="interaction">
    <interactant intactId="EBI-351394">
        <id>Q16643</id>
    </interactant>
    <interactant intactId="EBI-696162">
        <id>P60484</id>
        <label>PTEN</label>
    </interactant>
    <organismsDiffer>false</organismsDiffer>
    <experiments>5</experiments>
</comment>
<comment type="interaction">
    <interactant intactId="EBI-351394">
        <id>Q16643</id>
    </interactant>
    <interactant intactId="EBI-717399">
        <id>Q9BSI4</id>
        <label>TINF2</label>
    </interactant>
    <organismsDiffer>false</organismsDiffer>
    <experiments>2</experiments>
</comment>
<comment type="interaction">
    <interactant intactId="EBI-351394">
        <id>Q16643</id>
    </interactant>
    <interactant intactId="EBI-765834">
        <id>Q9ULU4</id>
        <label>ZMYND8</label>
    </interactant>
    <organismsDiffer>false</organismsDiffer>
    <experiments>4</experiments>
</comment>
<comment type="interaction">
    <interactant intactId="EBI-351394">
        <id>Q16643</id>
    </interactant>
    <interactant intactId="EBI-6654073">
        <id>O35889</id>
        <label>Afdn</label>
    </interactant>
    <organismsDiffer>true</organismsDiffer>
    <experiments>3</experiments>
</comment>
<comment type="subcellular location">
    <subcellularLocation>
        <location evidence="8 9 12">Cytoplasm</location>
    </subcellularLocation>
    <subcellularLocation>
        <location evidence="12">Cell projection</location>
        <location evidence="12">Dendrite</location>
    </subcellularLocation>
    <subcellularLocation>
        <location evidence="8">Cytoplasm</location>
        <location evidence="8">Cell cortex</location>
    </subcellularLocation>
    <subcellularLocation>
        <location evidence="8">Cell junction</location>
    </subcellularLocation>
    <subcellularLocation>
        <location evidence="1">Cell projection</location>
        <location evidence="1">Growth cone</location>
    </subcellularLocation>
    <text evidence="1 8">In the absence of antigen, evenly distributed throughout subcortical regions of the T-cell membrane and cytoplasm (PubMed:20215400). In the presence of antigen, distributes to the immunological synapse forming at the T-cell-APC contact area, where it localizes at the peripheral and distal supramolecular activation clusters (SMAC) (PubMed:20215400). Colocalized with RUFY3 and F-actin at the transitional domain of the axonal growth cone (By similarity).</text>
</comment>
<comment type="alternative products">
    <event type="alternative splicing"/>
    <isoform>
        <id>Q16643-1</id>
        <name>1</name>
        <name>Drebrin E</name>
        <name>drebrin E2</name>
        <name>Embryonic drebrin</name>
        <sequence type="displayed"/>
    </isoform>
    <isoform>
        <id>Q16643-2</id>
        <name>2</name>
        <sequence type="described" ref="VSP_028175"/>
    </isoform>
    <isoform>
        <id>Q16643-3</id>
        <name>3</name>
        <name>Drebrin A</name>
        <sequence type="described" ref="VSP_053443"/>
    </isoform>
</comment>
<comment type="tissue specificity">
    <text evidence="8 11 12 13">Expressed in the brain, with expression in the molecular layer of the dentate gyrus, stratum pyramidale, and stratum radiatum of the hippocampus (at protein level) (PubMed:8838578). Also expressed in the terminal varicosities distributed along dendritic trees of pyramidal cells in CA4 and CA3 of the hippocampus (at protein level) (PubMed:8838578). Expressed in pyramidal cells in CA2, CA1 and the subiculum of the hippocampus (at protein level) (PubMed:8838578). Expressed in peripheral blood lymphocytes, including T-cells (at protein level) (PubMed:20215400). Expressed in the brain (PubMed:8216329, Ref.2). Expressed in the heart, placenta, lung, skeletal muscle, kidney, pancreas, skin fibroblasts, gingival fibroblasts and bone-derived cells (Ref.2).</text>
</comment>
<comment type="disease" evidence="12">
    <disease id="DI-03832">
        <name>Alzheimer disease</name>
        <acronym>AD</acronym>
        <description>Alzheimer disease is a neurodegenerative disorder characterized by progressive dementia, loss of cognitive abilities, and deposition of fibrillar amyloid proteins as intraneuronal neurofibrillary tangles, extracellular amyloid plaques and vascular amyloid deposits. The major constituents of these plaques are neurotoxic amyloid-beta protein 40 and amyloid-beta protein 42, that are produced by the proteolysis of the transmembrane APP protein. The cytotoxic C-terminal fragments (CTFs) and the caspase-cleaved products, such as C31, are also implicated in neuronal death.</description>
        <dbReference type="MIM" id="104300"/>
    </disease>
    <text evidence="12">The protein represented in this entry may be involved in disease pathogenesis. In brains of patients with AD, decreased expression and absence from dystrophic neurites in amyloid plaques. Disappearance of debrin from the hippocampus may contribute to the pathogenesis of memory disturbance in AD.</text>
</comment>
<protein>
    <recommendedName>
        <fullName>Drebrin</fullName>
    </recommendedName>
    <alternativeName>
        <fullName>Developmentally-regulated brain protein</fullName>
    </alternativeName>
</protein>
<evidence type="ECO:0000250" key="1">
    <source>
        <dbReference type="UniProtKB" id="Q9QXS6"/>
    </source>
</evidence>
<evidence type="ECO:0000255" key="2">
    <source>
        <dbReference type="PROSITE-ProRule" id="PRU00599"/>
    </source>
</evidence>
<evidence type="ECO:0000256" key="3">
    <source>
        <dbReference type="SAM" id="MobiDB-lite"/>
    </source>
</evidence>
<evidence type="ECO:0000269" key="4">
    <source>
    </source>
</evidence>
<evidence type="ECO:0000269" key="5">
    <source>
    </source>
</evidence>
<evidence type="ECO:0000269" key="6">
    <source>
    </source>
</evidence>
<evidence type="ECO:0000269" key="7">
    <source>
    </source>
</evidence>
<evidence type="ECO:0000269" key="8">
    <source>
    </source>
</evidence>
<evidence type="ECO:0000269" key="9">
    <source>
    </source>
</evidence>
<evidence type="ECO:0000269" key="10">
    <source>
    </source>
</evidence>
<evidence type="ECO:0000269" key="11">
    <source>
    </source>
</evidence>
<evidence type="ECO:0000269" key="12">
    <source>
    </source>
</evidence>
<evidence type="ECO:0000269" key="13">
    <source ref="2"/>
</evidence>
<evidence type="ECO:0000269" key="14">
    <source ref="8"/>
</evidence>
<evidence type="ECO:0000303" key="15">
    <source>
    </source>
</evidence>
<evidence type="ECO:0000303" key="16">
    <source>
    </source>
</evidence>
<evidence type="ECO:0007744" key="17">
    <source>
        <dbReference type="PDB" id="5Y1Z"/>
    </source>
</evidence>
<evidence type="ECO:0007744" key="18">
    <source>
    </source>
</evidence>
<evidence type="ECO:0007744" key="19">
    <source>
    </source>
</evidence>
<evidence type="ECO:0007744" key="20">
    <source>
    </source>
</evidence>
<evidence type="ECO:0007744" key="21">
    <source>
    </source>
</evidence>
<evidence type="ECO:0007744" key="22">
    <source>
    </source>
</evidence>
<evidence type="ECO:0007744" key="23">
    <source>
    </source>
</evidence>
<evidence type="ECO:0007744" key="24">
    <source>
    </source>
</evidence>
<evidence type="ECO:0007829" key="25">
    <source>
        <dbReference type="PDB" id="5Y1Z"/>
    </source>
</evidence>
<evidence type="ECO:0007829" key="26">
    <source>
        <dbReference type="PDB" id="5ZZ9"/>
    </source>
</evidence>
<gene>
    <name type="primary">DBN1</name>
    <name type="synonym">D0S117E</name>
</gene>
<dbReference type="EMBL" id="D17530">
    <property type="protein sequence ID" value="BAA04480.1"/>
    <property type="molecule type" value="mRNA"/>
</dbReference>
<dbReference type="EMBL" id="U00802">
    <property type="protein sequence ID" value="AAA16256.1"/>
    <property type="molecule type" value="mRNA"/>
</dbReference>
<dbReference type="EMBL" id="AK314645">
    <property type="protein sequence ID" value="BAG37207.1"/>
    <property type="molecule type" value="mRNA"/>
</dbReference>
<dbReference type="EMBL" id="AL110225">
    <property type="protein sequence ID" value="CAB53683.1"/>
    <property type="molecule type" value="mRNA"/>
</dbReference>
<dbReference type="EMBL" id="AC145098">
    <property type="status" value="NOT_ANNOTATED_CDS"/>
    <property type="molecule type" value="Genomic_DNA"/>
</dbReference>
<dbReference type="EMBL" id="BC000283">
    <property type="protein sequence ID" value="AAH00283.1"/>
    <property type="molecule type" value="mRNA"/>
</dbReference>
<dbReference type="EMBL" id="BC007281">
    <property type="protein sequence ID" value="AAH07281.1"/>
    <property type="molecule type" value="mRNA"/>
</dbReference>
<dbReference type="EMBL" id="BC007567">
    <property type="protein sequence ID" value="AAH07567.1"/>
    <property type="molecule type" value="mRNA"/>
</dbReference>
<dbReference type="EMBL" id="BC114553">
    <property type="status" value="NOT_ANNOTATED_CDS"/>
    <property type="molecule type" value="mRNA"/>
</dbReference>
<dbReference type="CCDS" id="CCDS4420.1">
    <molecule id="Q16643-1"/>
</dbReference>
<dbReference type="CCDS" id="CCDS4421.1">
    <molecule id="Q16643-2"/>
</dbReference>
<dbReference type="CCDS" id="CCDS87354.1">
    <molecule id="Q16643-3"/>
</dbReference>
<dbReference type="PIR" id="JN0809">
    <property type="entry name" value="JN0809"/>
</dbReference>
<dbReference type="PIR" id="T14763">
    <property type="entry name" value="T14763"/>
</dbReference>
<dbReference type="RefSeq" id="NP_001350470.2">
    <molecule id="Q16643-3"/>
    <property type="nucleotide sequence ID" value="NM_001363541.2"/>
</dbReference>
<dbReference type="RefSeq" id="NP_004386.2">
    <molecule id="Q16643-1"/>
    <property type="nucleotide sequence ID" value="NM_004395.3"/>
</dbReference>
<dbReference type="RefSeq" id="NP_543157.2">
    <molecule id="Q16643-2"/>
    <property type="nucleotide sequence ID" value="NM_080881.3"/>
</dbReference>
<dbReference type="RefSeq" id="XP_005265884.1">
    <property type="nucleotide sequence ID" value="XM_005265827.3"/>
</dbReference>
<dbReference type="RefSeq" id="XP_016864629.1">
    <property type="nucleotide sequence ID" value="XM_017009140.1"/>
</dbReference>
<dbReference type="PDB" id="5Y1Z">
    <property type="method" value="X-ray"/>
    <property type="resolution" value="2.68 A"/>
    <property type="chains" value="A/B=1-135"/>
</dbReference>
<dbReference type="PDB" id="5ZZ9">
    <property type="method" value="X-ray"/>
    <property type="resolution" value="2.30 A"/>
    <property type="chains" value="D/E/F=530-551"/>
</dbReference>
<dbReference type="PDBsum" id="5Y1Z"/>
<dbReference type="PDBsum" id="5ZZ9"/>
<dbReference type="SMR" id="Q16643"/>
<dbReference type="BioGRID" id="107995">
    <property type="interactions" value="418"/>
</dbReference>
<dbReference type="FunCoup" id="Q16643">
    <property type="interactions" value="1214"/>
</dbReference>
<dbReference type="IntAct" id="Q16643">
    <property type="interactions" value="302"/>
</dbReference>
<dbReference type="MINT" id="Q16643"/>
<dbReference type="STRING" id="9606.ENSP00000377195"/>
<dbReference type="GlyGen" id="Q16643">
    <property type="glycosylation" value="3 sites, 1 O-linked glycan (2 sites)"/>
</dbReference>
<dbReference type="iPTMnet" id="Q16643"/>
<dbReference type="MetOSite" id="Q16643"/>
<dbReference type="PhosphoSitePlus" id="Q16643"/>
<dbReference type="SwissPalm" id="Q16643"/>
<dbReference type="BioMuta" id="DBN1"/>
<dbReference type="DMDM" id="215274247"/>
<dbReference type="OGP" id="Q16643"/>
<dbReference type="CPTAC" id="CPTAC-347"/>
<dbReference type="CPTAC" id="CPTAC-348"/>
<dbReference type="jPOST" id="Q16643"/>
<dbReference type="MassIVE" id="Q16643"/>
<dbReference type="PaxDb" id="9606-ENSP00000292385"/>
<dbReference type="PeptideAtlas" id="Q16643"/>
<dbReference type="ProteomicsDB" id="2155"/>
<dbReference type="ProteomicsDB" id="60996">
    <molecule id="Q16643-1"/>
</dbReference>
<dbReference type="ProteomicsDB" id="60997">
    <molecule id="Q16643-2"/>
</dbReference>
<dbReference type="Pumba" id="Q16643"/>
<dbReference type="Antibodypedia" id="3641">
    <property type="antibodies" value="369 antibodies from 37 providers"/>
</dbReference>
<dbReference type="DNASU" id="1627"/>
<dbReference type="Ensembl" id="ENST00000292385.9">
    <molecule id="Q16643-2"/>
    <property type="protein sequence ID" value="ENSP00000292385.5"/>
    <property type="gene ID" value="ENSG00000113758.14"/>
</dbReference>
<dbReference type="Ensembl" id="ENST00000309007.9">
    <molecule id="Q16643-1"/>
    <property type="protein sequence ID" value="ENSP00000308532.5"/>
    <property type="gene ID" value="ENSG00000113758.14"/>
</dbReference>
<dbReference type="Ensembl" id="ENST00000393565.6">
    <molecule id="Q16643-3"/>
    <property type="protein sequence ID" value="ENSP00000377195.1"/>
    <property type="gene ID" value="ENSG00000113758.14"/>
</dbReference>
<dbReference type="GeneID" id="1627"/>
<dbReference type="KEGG" id="hsa:1627"/>
<dbReference type="MANE-Select" id="ENST00000393565.6">
    <molecule id="Q16643-3"/>
    <property type="protein sequence ID" value="ENSP00000377195.1"/>
    <property type="RefSeq nucleotide sequence ID" value="NM_001363541.2"/>
    <property type="RefSeq protein sequence ID" value="NP_001350470.2"/>
</dbReference>
<dbReference type="UCSC" id="uc003mgx.3">
    <molecule id="Q16643-1"/>
    <property type="organism name" value="human"/>
</dbReference>
<dbReference type="AGR" id="HGNC:2695"/>
<dbReference type="CTD" id="1627"/>
<dbReference type="DisGeNET" id="1627"/>
<dbReference type="GeneCards" id="DBN1"/>
<dbReference type="HGNC" id="HGNC:2695">
    <property type="gene designation" value="DBN1"/>
</dbReference>
<dbReference type="HPA" id="ENSG00000113758">
    <property type="expression patterns" value="Low tissue specificity"/>
</dbReference>
<dbReference type="MIM" id="104300">
    <property type="type" value="phenotype"/>
</dbReference>
<dbReference type="MIM" id="126660">
    <property type="type" value="gene"/>
</dbReference>
<dbReference type="neXtProt" id="NX_Q16643"/>
<dbReference type="OpenTargets" id="ENSG00000113758"/>
<dbReference type="PharmGKB" id="PA27163"/>
<dbReference type="VEuPathDB" id="HostDB:ENSG00000113758"/>
<dbReference type="eggNOG" id="KOG3655">
    <property type="taxonomic scope" value="Eukaryota"/>
</dbReference>
<dbReference type="GeneTree" id="ENSGT00940000159431"/>
<dbReference type="HOGENOM" id="CLU_013085_3_0_1"/>
<dbReference type="InParanoid" id="Q16643"/>
<dbReference type="OMA" id="EEHRWEA"/>
<dbReference type="OrthoDB" id="5971719at2759"/>
<dbReference type="PAN-GO" id="Q16643">
    <property type="GO annotations" value="14 GO annotations based on evolutionary models"/>
</dbReference>
<dbReference type="PhylomeDB" id="Q16643"/>
<dbReference type="TreeFam" id="TF318935"/>
<dbReference type="PathwayCommons" id="Q16643"/>
<dbReference type="Reactome" id="R-HSA-9013405">
    <property type="pathway name" value="RHOD GTPase cycle"/>
</dbReference>
<dbReference type="Reactome" id="R-HSA-9013407">
    <property type="pathway name" value="RHOH GTPase cycle"/>
</dbReference>
<dbReference type="Reactome" id="R-HSA-9013418">
    <property type="pathway name" value="RHOBTB2 GTPase cycle"/>
</dbReference>
<dbReference type="Reactome" id="R-HSA-9013422">
    <property type="pathway name" value="RHOBTB1 GTPase cycle"/>
</dbReference>
<dbReference type="SignaLink" id="Q16643"/>
<dbReference type="BioGRID-ORCS" id="1627">
    <property type="hits" value="15 hits in 1155 CRISPR screens"/>
</dbReference>
<dbReference type="CD-CODE" id="FB4E32DD">
    <property type="entry name" value="Presynaptic clusters and postsynaptic densities"/>
</dbReference>
<dbReference type="ChiTaRS" id="DBN1">
    <property type="organism name" value="human"/>
</dbReference>
<dbReference type="GeneWiki" id="DBN1"/>
<dbReference type="GenomeRNAi" id="1627"/>
<dbReference type="Pharos" id="Q16643">
    <property type="development level" value="Tbio"/>
</dbReference>
<dbReference type="PRO" id="PR:Q16643"/>
<dbReference type="Proteomes" id="UP000005640">
    <property type="component" value="Chromosome 5"/>
</dbReference>
<dbReference type="RNAct" id="Q16643">
    <property type="molecule type" value="protein"/>
</dbReference>
<dbReference type="Bgee" id="ENSG00000113758">
    <property type="expression patterns" value="Expressed in ganglionic eminence and 199 other cell types or tissues"/>
</dbReference>
<dbReference type="ExpressionAtlas" id="Q16643">
    <property type="expression patterns" value="baseline and differential"/>
</dbReference>
<dbReference type="GO" id="GO:0015629">
    <property type="term" value="C:actin cytoskeleton"/>
    <property type="evidence" value="ECO:0000250"/>
    <property type="project" value="UniProtKB"/>
</dbReference>
<dbReference type="GO" id="GO:0042641">
    <property type="term" value="C:actomyosin"/>
    <property type="evidence" value="ECO:0000303"/>
    <property type="project" value="UniProtKB"/>
</dbReference>
<dbReference type="GO" id="GO:0030863">
    <property type="term" value="C:cortical cytoskeleton"/>
    <property type="evidence" value="ECO:0000304"/>
    <property type="project" value="ARUK-UCL"/>
</dbReference>
<dbReference type="GO" id="GO:0005737">
    <property type="term" value="C:cytoplasm"/>
    <property type="evidence" value="ECO:0000314"/>
    <property type="project" value="UniProtKB"/>
</dbReference>
<dbReference type="GO" id="GO:0005856">
    <property type="term" value="C:cytoskeleton"/>
    <property type="evidence" value="ECO:0000314"/>
    <property type="project" value="ARUK-UCL"/>
</dbReference>
<dbReference type="GO" id="GO:0030425">
    <property type="term" value="C:dendrite"/>
    <property type="evidence" value="ECO:0000314"/>
    <property type="project" value="UniProtKB"/>
</dbReference>
<dbReference type="GO" id="GO:0005921">
    <property type="term" value="C:gap junction"/>
    <property type="evidence" value="ECO:0007669"/>
    <property type="project" value="Ensembl"/>
</dbReference>
<dbReference type="GO" id="GO:0098978">
    <property type="term" value="C:glutamatergic synapse"/>
    <property type="evidence" value="ECO:0007669"/>
    <property type="project" value="Ensembl"/>
</dbReference>
<dbReference type="GO" id="GO:0030426">
    <property type="term" value="C:growth cone"/>
    <property type="evidence" value="ECO:0000250"/>
    <property type="project" value="UniProtKB"/>
</dbReference>
<dbReference type="GO" id="GO:0099524">
    <property type="term" value="C:postsynaptic cytosol"/>
    <property type="evidence" value="ECO:0007669"/>
    <property type="project" value="Ensembl"/>
</dbReference>
<dbReference type="GO" id="GO:0014069">
    <property type="term" value="C:postsynaptic density"/>
    <property type="evidence" value="ECO:0007669"/>
    <property type="project" value="Ensembl"/>
</dbReference>
<dbReference type="GO" id="GO:0045211">
    <property type="term" value="C:postsynaptic membrane"/>
    <property type="evidence" value="ECO:0007669"/>
    <property type="project" value="Ensembl"/>
</dbReference>
<dbReference type="GO" id="GO:0003779">
    <property type="term" value="F:actin binding"/>
    <property type="evidence" value="ECO:0000304"/>
    <property type="project" value="ProtInc"/>
</dbReference>
<dbReference type="GO" id="GO:0045296">
    <property type="term" value="F:cadherin binding"/>
    <property type="evidence" value="ECO:0007005"/>
    <property type="project" value="BHF-UCL"/>
</dbReference>
<dbReference type="GO" id="GO:0005522">
    <property type="term" value="F:profilin binding"/>
    <property type="evidence" value="ECO:0000250"/>
    <property type="project" value="UniProtKB"/>
</dbReference>
<dbReference type="GO" id="GO:0140311">
    <property type="term" value="F:protein sequestering activity"/>
    <property type="evidence" value="ECO:0000314"/>
    <property type="project" value="UniProtKB"/>
</dbReference>
<dbReference type="GO" id="GO:0007015">
    <property type="term" value="P:actin filament organization"/>
    <property type="evidence" value="ECO:0000250"/>
    <property type="project" value="UniProtKB"/>
</dbReference>
<dbReference type="GO" id="GO:0010643">
    <property type="term" value="P:cell communication by chemical coupling"/>
    <property type="evidence" value="ECO:0007669"/>
    <property type="project" value="Ensembl"/>
</dbReference>
<dbReference type="GO" id="GO:0010644">
    <property type="term" value="P:cell communication by electrical coupling"/>
    <property type="evidence" value="ECO:0007669"/>
    <property type="project" value="Ensembl"/>
</dbReference>
<dbReference type="GO" id="GO:0048699">
    <property type="term" value="P:generation of neurons"/>
    <property type="evidence" value="ECO:0007669"/>
    <property type="project" value="Ensembl"/>
</dbReference>
<dbReference type="GO" id="GO:0001701">
    <property type="term" value="P:in utero embryonic development"/>
    <property type="evidence" value="ECO:0007669"/>
    <property type="project" value="Ensembl"/>
</dbReference>
<dbReference type="GO" id="GO:0032507">
    <property type="term" value="P:maintenance of protein location in cell"/>
    <property type="evidence" value="ECO:0007669"/>
    <property type="project" value="Ensembl"/>
</dbReference>
<dbReference type="GO" id="GO:0061351">
    <property type="term" value="P:neural precursor cell proliferation"/>
    <property type="evidence" value="ECO:0007669"/>
    <property type="project" value="Ensembl"/>
</dbReference>
<dbReference type="GO" id="GO:0061003">
    <property type="term" value="P:positive regulation of dendritic spine morphogenesis"/>
    <property type="evidence" value="ECO:0000250"/>
    <property type="project" value="UniProtKB"/>
</dbReference>
<dbReference type="GO" id="GO:1902685">
    <property type="term" value="P:positive regulation of receptor localization to synapse"/>
    <property type="evidence" value="ECO:0000250"/>
    <property type="project" value="UniProtKB"/>
</dbReference>
<dbReference type="GO" id="GO:0031915">
    <property type="term" value="P:positive regulation of synaptic plasticity"/>
    <property type="evidence" value="ECO:0000250"/>
    <property type="project" value="UniProtKB"/>
</dbReference>
<dbReference type="GO" id="GO:0050773">
    <property type="term" value="P:regulation of dendrite development"/>
    <property type="evidence" value="ECO:0000303"/>
    <property type="project" value="UniProtKB"/>
</dbReference>
<dbReference type="GO" id="GO:0048168">
    <property type="term" value="P:regulation of neuronal synaptic plasticity"/>
    <property type="evidence" value="ECO:0000303"/>
    <property type="project" value="UniProtKB"/>
</dbReference>
<dbReference type="CDD" id="cd11281">
    <property type="entry name" value="ADF_drebrin_like"/>
    <property type="match status" value="1"/>
</dbReference>
<dbReference type="FunFam" id="3.40.20.10:FF:000032">
    <property type="entry name" value="Drebrin 1"/>
    <property type="match status" value="1"/>
</dbReference>
<dbReference type="Gene3D" id="3.40.20.10">
    <property type="entry name" value="Severin"/>
    <property type="match status" value="1"/>
</dbReference>
<dbReference type="InterPro" id="IPR002108">
    <property type="entry name" value="ADF-H"/>
</dbReference>
<dbReference type="InterPro" id="IPR029006">
    <property type="entry name" value="ADF-H/Gelsolin-like_dom_sf"/>
</dbReference>
<dbReference type="PANTHER" id="PTHR10829">
    <property type="entry name" value="CORTACTIN AND DREBRIN"/>
    <property type="match status" value="1"/>
</dbReference>
<dbReference type="PANTHER" id="PTHR10829:SF1">
    <property type="entry name" value="DREBRIN"/>
    <property type="match status" value="1"/>
</dbReference>
<dbReference type="Pfam" id="PF00241">
    <property type="entry name" value="Cofilin_ADF"/>
    <property type="match status" value="1"/>
</dbReference>
<dbReference type="SMART" id="SM00102">
    <property type="entry name" value="ADF"/>
    <property type="match status" value="1"/>
</dbReference>
<dbReference type="SUPFAM" id="SSF55753">
    <property type="entry name" value="Actin depolymerizing proteins"/>
    <property type="match status" value="1"/>
</dbReference>
<dbReference type="PROSITE" id="PS51263">
    <property type="entry name" value="ADF_H"/>
    <property type="match status" value="1"/>
</dbReference>
<proteinExistence type="evidence at protein level"/>
<reference key="1">
    <citation type="journal article" date="1993" name="Biochem. Biophys. Res. Commun.">
        <title>Molecular cloning of cDNA encoding human drebrin E and chromosomal mapping of its gene.</title>
        <authorList>
            <person name="Toda M."/>
            <person name="Shirao T."/>
            <person name="Minoshima S."/>
            <person name="Shimizu N."/>
            <person name="Toya S."/>
            <person name="Uyemura K."/>
        </authorList>
    </citation>
    <scope>NUCLEOTIDE SEQUENCE [MRNA] (ISOFORM 1)</scope>
    <scope>TISSUE SPECIFICITY</scope>
    <scope>VARIANTS VAL-446 AND PRO-553</scope>
    <source>
        <tissue>Fetal brain</tissue>
    </source>
</reference>
<reference key="2">
    <citation type="journal article" date="1994" name="Neurosci. Res. Commun.">
        <title>Human drebrin: cDNA sequence, mRNA tissue distribution and chromosomal localization.</title>
        <authorList>
            <person name="Fisher L.W."/>
            <person name="McBride O.W."/>
            <person name="Filpula D."/>
            <person name="Ibaraki K."/>
            <person name="Young M.F."/>
        </authorList>
    </citation>
    <scope>NUCLEOTIDE SEQUENCE [MRNA] (ISOFORM 1)</scope>
    <scope>TISSUE SPECIFICITY</scope>
    <scope>VARIANTS VAL-446 AND PRO-553</scope>
    <source>
        <tissue>Osteoblast</tissue>
    </source>
</reference>
<reference key="3">
    <citation type="journal article" date="2004" name="Nat. Genet.">
        <title>Complete sequencing and characterization of 21,243 full-length human cDNAs.</title>
        <authorList>
            <person name="Ota T."/>
            <person name="Suzuki Y."/>
            <person name="Nishikawa T."/>
            <person name="Otsuki T."/>
            <person name="Sugiyama T."/>
            <person name="Irie R."/>
            <person name="Wakamatsu A."/>
            <person name="Hayashi K."/>
            <person name="Sato H."/>
            <person name="Nagai K."/>
            <person name="Kimura K."/>
            <person name="Makita H."/>
            <person name="Sekine M."/>
            <person name="Obayashi M."/>
            <person name="Nishi T."/>
            <person name="Shibahara T."/>
            <person name="Tanaka T."/>
            <person name="Ishii S."/>
            <person name="Yamamoto J."/>
            <person name="Saito K."/>
            <person name="Kawai Y."/>
            <person name="Isono Y."/>
            <person name="Nakamura Y."/>
            <person name="Nagahari K."/>
            <person name="Murakami K."/>
            <person name="Yasuda T."/>
            <person name="Iwayanagi T."/>
            <person name="Wagatsuma M."/>
            <person name="Shiratori A."/>
            <person name="Sudo H."/>
            <person name="Hosoiri T."/>
            <person name="Kaku Y."/>
            <person name="Kodaira H."/>
            <person name="Kondo H."/>
            <person name="Sugawara M."/>
            <person name="Takahashi M."/>
            <person name="Kanda K."/>
            <person name="Yokoi T."/>
            <person name="Furuya T."/>
            <person name="Kikkawa E."/>
            <person name="Omura Y."/>
            <person name="Abe K."/>
            <person name="Kamihara K."/>
            <person name="Katsuta N."/>
            <person name="Sato K."/>
            <person name="Tanikawa M."/>
            <person name="Yamazaki M."/>
            <person name="Ninomiya K."/>
            <person name="Ishibashi T."/>
            <person name="Yamashita H."/>
            <person name="Murakawa K."/>
            <person name="Fujimori K."/>
            <person name="Tanai H."/>
            <person name="Kimata M."/>
            <person name="Watanabe M."/>
            <person name="Hiraoka S."/>
            <person name="Chiba Y."/>
            <person name="Ishida S."/>
            <person name="Ono Y."/>
            <person name="Takiguchi S."/>
            <person name="Watanabe S."/>
            <person name="Yosida M."/>
            <person name="Hotuta T."/>
            <person name="Kusano J."/>
            <person name="Kanehori K."/>
            <person name="Takahashi-Fujii A."/>
            <person name="Hara H."/>
            <person name="Tanase T.-O."/>
            <person name="Nomura Y."/>
            <person name="Togiya S."/>
            <person name="Komai F."/>
            <person name="Hara R."/>
            <person name="Takeuchi K."/>
            <person name="Arita M."/>
            <person name="Imose N."/>
            <person name="Musashino K."/>
            <person name="Yuuki H."/>
            <person name="Oshima A."/>
            <person name="Sasaki N."/>
            <person name="Aotsuka S."/>
            <person name="Yoshikawa Y."/>
            <person name="Matsunawa H."/>
            <person name="Ichihara T."/>
            <person name="Shiohata N."/>
            <person name="Sano S."/>
            <person name="Moriya S."/>
            <person name="Momiyama H."/>
            <person name="Satoh N."/>
            <person name="Takami S."/>
            <person name="Terashima Y."/>
            <person name="Suzuki O."/>
            <person name="Nakagawa S."/>
            <person name="Senoh A."/>
            <person name="Mizoguchi H."/>
            <person name="Goto Y."/>
            <person name="Shimizu F."/>
            <person name="Wakebe H."/>
            <person name="Hishigaki H."/>
            <person name="Watanabe T."/>
            <person name="Sugiyama A."/>
            <person name="Takemoto M."/>
            <person name="Kawakami B."/>
            <person name="Yamazaki M."/>
            <person name="Watanabe K."/>
            <person name="Kumagai A."/>
            <person name="Itakura S."/>
            <person name="Fukuzumi Y."/>
            <person name="Fujimori Y."/>
            <person name="Komiyama M."/>
            <person name="Tashiro H."/>
            <person name="Tanigami A."/>
            <person name="Fujiwara T."/>
            <person name="Ono T."/>
            <person name="Yamada K."/>
            <person name="Fujii Y."/>
            <person name="Ozaki K."/>
            <person name="Hirao M."/>
            <person name="Ohmori Y."/>
            <person name="Kawabata A."/>
            <person name="Hikiji T."/>
            <person name="Kobatake N."/>
            <person name="Inagaki H."/>
            <person name="Ikema Y."/>
            <person name="Okamoto S."/>
            <person name="Okitani R."/>
            <person name="Kawakami T."/>
            <person name="Noguchi S."/>
            <person name="Itoh T."/>
            <person name="Shigeta K."/>
            <person name="Senba T."/>
            <person name="Matsumura K."/>
            <person name="Nakajima Y."/>
            <person name="Mizuno T."/>
            <person name="Morinaga M."/>
            <person name="Sasaki M."/>
            <person name="Togashi T."/>
            <person name="Oyama M."/>
            <person name="Hata H."/>
            <person name="Watanabe M."/>
            <person name="Komatsu T."/>
            <person name="Mizushima-Sugano J."/>
            <person name="Satoh T."/>
            <person name="Shirai Y."/>
            <person name="Takahashi Y."/>
            <person name="Nakagawa K."/>
            <person name="Okumura K."/>
            <person name="Nagase T."/>
            <person name="Nomura N."/>
            <person name="Kikuchi H."/>
            <person name="Masuho Y."/>
            <person name="Yamashita R."/>
            <person name="Nakai K."/>
            <person name="Yada T."/>
            <person name="Nakamura Y."/>
            <person name="Ohara O."/>
            <person name="Isogai T."/>
            <person name="Sugano S."/>
        </authorList>
    </citation>
    <scope>NUCLEOTIDE SEQUENCE [LARGE SCALE MRNA] (ISOFORM 1)</scope>
</reference>
<reference key="4">
    <citation type="journal article" date="2007" name="BMC Genomics">
        <title>The full-ORF clone resource of the German cDNA consortium.</title>
        <authorList>
            <person name="Bechtel S."/>
            <person name="Rosenfelder H."/>
            <person name="Duda A."/>
            <person name="Schmidt C.P."/>
            <person name="Ernst U."/>
            <person name="Wellenreuther R."/>
            <person name="Mehrle A."/>
            <person name="Schuster C."/>
            <person name="Bahr A."/>
            <person name="Bloecker H."/>
            <person name="Heubner D."/>
            <person name="Hoerlein A."/>
            <person name="Michel G."/>
            <person name="Wedler H."/>
            <person name="Koehrer K."/>
            <person name="Ottenwaelder B."/>
            <person name="Poustka A."/>
            <person name="Wiemann S."/>
            <person name="Schupp I."/>
        </authorList>
    </citation>
    <scope>NUCLEOTIDE SEQUENCE [LARGE SCALE MRNA] (ISOFORM 2)</scope>
    <scope>VARIANTS VAL-446 AND PRO-553</scope>
    <source>
        <tissue>Testis</tissue>
    </source>
</reference>
<reference key="5">
    <citation type="journal article" date="2004" name="Nature">
        <title>The DNA sequence and comparative analysis of human chromosome 5.</title>
        <authorList>
            <person name="Schmutz J."/>
            <person name="Martin J."/>
            <person name="Terry A."/>
            <person name="Couronne O."/>
            <person name="Grimwood J."/>
            <person name="Lowry S."/>
            <person name="Gordon L.A."/>
            <person name="Scott D."/>
            <person name="Xie G."/>
            <person name="Huang W."/>
            <person name="Hellsten U."/>
            <person name="Tran-Gyamfi M."/>
            <person name="She X."/>
            <person name="Prabhakar S."/>
            <person name="Aerts A."/>
            <person name="Altherr M."/>
            <person name="Bajorek E."/>
            <person name="Black S."/>
            <person name="Branscomb E."/>
            <person name="Caoile C."/>
            <person name="Challacombe J.F."/>
            <person name="Chan Y.M."/>
            <person name="Denys M."/>
            <person name="Detter J.C."/>
            <person name="Escobar J."/>
            <person name="Flowers D."/>
            <person name="Fotopulos D."/>
            <person name="Glavina T."/>
            <person name="Gomez M."/>
            <person name="Gonzales E."/>
            <person name="Goodstein D."/>
            <person name="Grigoriev I."/>
            <person name="Groza M."/>
            <person name="Hammon N."/>
            <person name="Hawkins T."/>
            <person name="Haydu L."/>
            <person name="Israni S."/>
            <person name="Jett J."/>
            <person name="Kadner K."/>
            <person name="Kimball H."/>
            <person name="Kobayashi A."/>
            <person name="Lopez F."/>
            <person name="Lou Y."/>
            <person name="Martinez D."/>
            <person name="Medina C."/>
            <person name="Morgan J."/>
            <person name="Nandkeshwar R."/>
            <person name="Noonan J.P."/>
            <person name="Pitluck S."/>
            <person name="Pollard M."/>
            <person name="Predki P."/>
            <person name="Priest J."/>
            <person name="Ramirez L."/>
            <person name="Retterer J."/>
            <person name="Rodriguez A."/>
            <person name="Rogers S."/>
            <person name="Salamov A."/>
            <person name="Salazar A."/>
            <person name="Thayer N."/>
            <person name="Tice H."/>
            <person name="Tsai M."/>
            <person name="Ustaszewska A."/>
            <person name="Vo N."/>
            <person name="Wheeler J."/>
            <person name="Wu K."/>
            <person name="Yang J."/>
            <person name="Dickson M."/>
            <person name="Cheng J.-F."/>
            <person name="Eichler E.E."/>
            <person name="Olsen A."/>
            <person name="Pennacchio L.A."/>
            <person name="Rokhsar D.S."/>
            <person name="Richardson P."/>
            <person name="Lucas S.M."/>
            <person name="Myers R.M."/>
            <person name="Rubin E.M."/>
        </authorList>
    </citation>
    <scope>NUCLEOTIDE SEQUENCE [LARGE SCALE GENOMIC DNA]</scope>
</reference>
<reference key="6">
    <citation type="journal article" date="2004" name="Genome Res.">
        <title>The status, quality, and expansion of the NIH full-length cDNA project: the Mammalian Gene Collection (MGC).</title>
        <authorList>
            <consortium name="The MGC Project Team"/>
        </authorList>
    </citation>
    <scope>NUCLEOTIDE SEQUENCE [LARGE SCALE MRNA] (ISOFORM 1)</scope>
    <scope>NUCLEOTIDE SEQUENCE [LARGE SCALE MRNA] OF 37-521 (ISOFORM 3)</scope>
    <scope>VARIANTS VAL-446 AND PRO-553</scope>
    <source>
        <tissue>Eye</tissue>
        <tissue>Muscle</tissue>
    </source>
</reference>
<reference key="7">
    <citation type="journal article" date="2003" name="Nat. Biotechnol.">
        <title>Exploring proteomes and analyzing protein processing by mass spectrometric identification of sorted N-terminal peptides.</title>
        <authorList>
            <person name="Gevaert K."/>
            <person name="Goethals M."/>
            <person name="Martens L."/>
            <person name="Van Damme J."/>
            <person name="Staes A."/>
            <person name="Thomas G.R."/>
            <person name="Vandekerckhove J."/>
        </authorList>
    </citation>
    <scope>PROTEIN SEQUENCE OF 2-10</scope>
    <scope>ACETYLATION AT ALA-2</scope>
    <source>
        <tissue>Platelet</tissue>
    </source>
</reference>
<reference key="8">
    <citation type="submission" date="2009-06" db="UniProtKB">
        <authorList>
            <person name="Bienvenut W.V."/>
            <person name="Dozynkiewicz M."/>
            <person name="Norman J.C."/>
        </authorList>
    </citation>
    <scope>PROTEIN SEQUENCE OF 2-10; 43-62; 140-147; 150-165; 272-299 AND 328-390</scope>
    <scope>CLEAVAGE OF INITIATOR METHIONINE</scope>
    <scope>ACETYLATION AT ALA-2</scope>
    <scope>PHOSPHORYLATION AT SER-142</scope>
    <scope>IDENTIFICATION BY MASS SPECTROMETRY</scope>
    <source>
        <tissue>Ovarian carcinoma</tissue>
    </source>
</reference>
<reference key="9">
    <citation type="submission" date="2008-12" db="UniProtKB">
        <authorList>
            <person name="Lubec G."/>
            <person name="Chen W.-Q."/>
            <person name="Sun Y."/>
        </authorList>
    </citation>
    <scope>PROTEIN SEQUENCE OF 80-94</scope>
    <scope>IDENTIFICATION BY MASS SPECTROMETRY</scope>
    <source>
        <tissue>Fetal brain cortex</tissue>
    </source>
</reference>
<reference key="10">
    <citation type="journal article" date="1996" name="J. Neurosci. Res.">
        <title>Disappearance of actin-binding protein, drebrin, from hippocampal synapses in Alzheimer's disease.</title>
        <authorList>
            <person name="Harigaya Y."/>
            <person name="Shoji M."/>
            <person name="Shirao T."/>
            <person name="Hirai S."/>
        </authorList>
    </citation>
    <scope>SUBCELLULAR LOCATION</scope>
    <scope>TISSUE SPECIFICITY</scope>
    <scope>INVOLVEMENT IN AD</scope>
</reference>
<reference key="11">
    <citation type="journal article" date="2006" name="Cell">
        <title>Global, in vivo, and site-specific phosphorylation dynamics in signaling networks.</title>
        <authorList>
            <person name="Olsen J.V."/>
            <person name="Blagoev B."/>
            <person name="Gnad F."/>
            <person name="Macek B."/>
            <person name="Kumar C."/>
            <person name="Mortensen P."/>
            <person name="Mann M."/>
        </authorList>
    </citation>
    <scope>IDENTIFICATION BY MASS SPECTROMETRY [LARGE SCALE ANALYSIS]</scope>
    <source>
        <tissue>Cervix carcinoma</tissue>
    </source>
</reference>
<reference key="12">
    <citation type="journal article" date="2008" name="J. Proteome Res.">
        <title>Combining protein-based IMAC, peptide-based IMAC, and MudPIT for efficient phosphoproteomic analysis.</title>
        <authorList>
            <person name="Cantin G.T."/>
            <person name="Yi W."/>
            <person name="Lu B."/>
            <person name="Park S.K."/>
            <person name="Xu T."/>
            <person name="Lee J.-D."/>
            <person name="Yates J.R. III"/>
        </authorList>
    </citation>
    <scope>IDENTIFICATION BY MASS SPECTROMETRY [LARGE SCALE ANALYSIS]</scope>
    <source>
        <tissue>Cervix carcinoma</tissue>
    </source>
</reference>
<reference key="13">
    <citation type="journal article" date="2008" name="J. Proteome Res.">
        <title>Phosphoproteome of resting human platelets.</title>
        <authorList>
            <person name="Zahedi R.P."/>
            <person name="Lewandrowski U."/>
            <person name="Wiesner J."/>
            <person name="Wortelkamp S."/>
            <person name="Moebius J."/>
            <person name="Schuetz C."/>
            <person name="Walter U."/>
            <person name="Gambaryan S."/>
            <person name="Sickmann A."/>
        </authorList>
    </citation>
    <scope>IDENTIFICATION BY MASS SPECTROMETRY [LARGE SCALE ANALYSIS]</scope>
    <source>
        <tissue>Platelet</tissue>
    </source>
</reference>
<reference key="14">
    <citation type="journal article" date="2008" name="Proc. Natl. Acad. Sci. U.S.A.">
        <title>A quantitative atlas of mitotic phosphorylation.</title>
        <authorList>
            <person name="Dephoure N."/>
            <person name="Zhou C."/>
            <person name="Villen J."/>
            <person name="Beausoleil S.A."/>
            <person name="Bakalarski C.E."/>
            <person name="Elledge S.J."/>
            <person name="Gygi S.P."/>
        </authorList>
    </citation>
    <scope>PHOSPHORYLATION [LARGE SCALE ANALYSIS] AT SER-142; THR-331; THR-335; SER-337 AND THR-346</scope>
    <scope>IDENTIFICATION BY MASS SPECTROMETRY [LARGE SCALE ANALYSIS]</scope>
    <source>
        <tissue>Cervix carcinoma</tissue>
    </source>
</reference>
<reference key="15">
    <citation type="journal article" date="2009" name="Anal. Chem.">
        <title>Lys-N and trypsin cover complementary parts of the phosphoproteome in a refined SCX-based approach.</title>
        <authorList>
            <person name="Gauci S."/>
            <person name="Helbig A.O."/>
            <person name="Slijper M."/>
            <person name="Krijgsveld J."/>
            <person name="Heck A.J."/>
            <person name="Mohammed S."/>
        </authorList>
    </citation>
    <scope>ACETYLATION [LARGE SCALE ANALYSIS] AT ALA-2</scope>
    <scope>CLEAVAGE OF INITIATOR METHIONINE [LARGE SCALE ANALYSIS]</scope>
    <scope>IDENTIFICATION BY MASS SPECTROMETRY [LARGE SCALE ANALYSIS]</scope>
</reference>
<reference key="16">
    <citation type="journal article" date="2009" name="Sci. Signal.">
        <title>Quantitative phosphoproteomic analysis of T cell receptor signaling reveals system-wide modulation of protein-protein interactions.</title>
        <authorList>
            <person name="Mayya V."/>
            <person name="Lundgren D.H."/>
            <person name="Hwang S.-I."/>
            <person name="Rezaul K."/>
            <person name="Wu L."/>
            <person name="Eng J.K."/>
            <person name="Rodionov V."/>
            <person name="Han D.K."/>
        </authorList>
    </citation>
    <scope>PHOSPHORYLATION [LARGE SCALE ANALYSIS] AT THR-331 AND THR-346</scope>
    <scope>IDENTIFICATION BY MASS SPECTROMETRY [LARGE SCALE ANALYSIS]</scope>
    <source>
        <tissue>Leukemic T-cell</tissue>
    </source>
</reference>
<reference key="17">
    <citation type="journal article" date="2010" name="J. Cell Sci.">
        <title>F-actin-binding protein drebrin regulates CXCR4 recruitment to the immune synapse.</title>
        <authorList>
            <person name="Perez-Martinez M."/>
            <person name="Gordon-Alonso M."/>
            <person name="Cabrero J.R."/>
            <person name="Barrero-Villar M."/>
            <person name="Rey M."/>
            <person name="Mittelbrunn M."/>
            <person name="Lamana A."/>
            <person name="Morlino G."/>
            <person name="Calabia C."/>
            <person name="Yamazaki H."/>
            <person name="Shirao T."/>
            <person name="Vazquez J."/>
            <person name="Gonzalez-Amaro R."/>
            <person name="Veiga E."/>
            <person name="Sanchez-Madrid F."/>
        </authorList>
    </citation>
    <scope>FUNCTION</scope>
    <scope>INTERACTION WITH CXCR4</scope>
    <scope>SUBCELLULAR LOCATION</scope>
    <scope>TISSUE SPECIFICITY</scope>
</reference>
<reference key="18">
    <citation type="journal article" date="2010" name="Sci. Signal.">
        <title>Quantitative phosphoproteomics reveals widespread full phosphorylation site occupancy during mitosis.</title>
        <authorList>
            <person name="Olsen J.V."/>
            <person name="Vermeulen M."/>
            <person name="Santamaria A."/>
            <person name="Kumar C."/>
            <person name="Miller M.L."/>
            <person name="Jensen L.J."/>
            <person name="Gnad F."/>
            <person name="Cox J."/>
            <person name="Jensen T.S."/>
            <person name="Nigg E.A."/>
            <person name="Brunak S."/>
            <person name="Mann M."/>
        </authorList>
    </citation>
    <scope>PHOSPHORYLATION [LARGE SCALE ANALYSIS] AT SER-141 AND SER-142</scope>
    <scope>IDENTIFICATION BY MASS SPECTROMETRY [LARGE SCALE ANALYSIS]</scope>
    <source>
        <tissue>Cervix carcinoma</tissue>
    </source>
</reference>
<reference key="19">
    <citation type="journal article" date="2011" name="BMC Syst. Biol.">
        <title>Initial characterization of the human central proteome.</title>
        <authorList>
            <person name="Burkard T.R."/>
            <person name="Planyavsky M."/>
            <person name="Kaupe I."/>
            <person name="Breitwieser F.P."/>
            <person name="Buerckstuemmer T."/>
            <person name="Bennett K.L."/>
            <person name="Superti-Furga G."/>
            <person name="Colinge J."/>
        </authorList>
    </citation>
    <scope>IDENTIFICATION BY MASS SPECTROMETRY [LARGE SCALE ANALYSIS]</scope>
</reference>
<reference key="20">
    <citation type="journal article" date="2011" name="Sci. Signal.">
        <title>System-wide temporal characterization of the proteome and phosphoproteome of human embryonic stem cell differentiation.</title>
        <authorList>
            <person name="Rigbolt K.T."/>
            <person name="Prokhorova T.A."/>
            <person name="Akimov V."/>
            <person name="Henningsen J."/>
            <person name="Johansen P.T."/>
            <person name="Kratchmarova I."/>
            <person name="Kassem M."/>
            <person name="Mann M."/>
            <person name="Olsen J.V."/>
            <person name="Blagoev B."/>
        </authorList>
    </citation>
    <scope>PHOSPHORYLATION [LARGE SCALE ANALYSIS] AT SER-141; SER-142; SER-337 AND SER-339</scope>
    <scope>IDENTIFICATION BY MASS SPECTROMETRY [LARGE SCALE ANALYSIS]</scope>
</reference>
<reference key="21">
    <citation type="journal article" date="2013" name="J. Proteome Res.">
        <title>Toward a comprehensive characterization of a human cancer cell phosphoproteome.</title>
        <authorList>
            <person name="Zhou H."/>
            <person name="Di Palma S."/>
            <person name="Preisinger C."/>
            <person name="Peng M."/>
            <person name="Polat A.N."/>
            <person name="Heck A.J."/>
            <person name="Mohammed S."/>
        </authorList>
    </citation>
    <scope>PHOSPHORYLATION [LARGE SCALE ANALYSIS] AT SER-141; SER-142; THR-331; SER-337; SER-339 AND THR-346</scope>
    <scope>IDENTIFICATION BY MASS SPECTROMETRY [LARGE SCALE ANALYSIS]</scope>
    <source>
        <tissue>Cervix carcinoma</tissue>
        <tissue>Erythroleukemia</tissue>
    </source>
</reference>
<reference key="22">
    <citation type="journal article" date="2014" name="J. Proteomics">
        <title>An enzyme assisted RP-RPLC approach for in-depth analysis of human liver phosphoproteome.</title>
        <authorList>
            <person name="Bian Y."/>
            <person name="Song C."/>
            <person name="Cheng K."/>
            <person name="Dong M."/>
            <person name="Wang F."/>
            <person name="Huang J."/>
            <person name="Sun D."/>
            <person name="Wang L."/>
            <person name="Ye M."/>
            <person name="Zou H."/>
        </authorList>
    </citation>
    <scope>PHOSPHORYLATION [LARGE SCALE ANALYSIS] AT SER-416 AND THR-497</scope>
    <scope>IDENTIFICATION BY MASS SPECTROMETRY [LARGE SCALE ANALYSIS]</scope>
    <source>
        <tissue>Liver</tissue>
    </source>
</reference>
<reference key="23">
    <citation type="journal article" date="2022" name="Genet. Med.">
        <title>De Novo ZMYND8 variants result in an autosomal dominant neurodevelopmental disorder with cardiac malformations.</title>
        <authorList>
            <person name="Dias K.R."/>
            <person name="Carlston C.M."/>
            <person name="Blok L.E.R."/>
            <person name="De Hayr L."/>
            <person name="Nawaz U."/>
            <person name="Evans C.A."/>
            <person name="Bayrak-Toydemir P."/>
            <person name="Htun S."/>
            <person name="Zhu Y."/>
            <person name="Ma A."/>
            <person name="Lynch S.A."/>
            <person name="Moorwood C."/>
            <person name="Stals K."/>
            <person name="Ellard S."/>
            <person name="Bainbridge M.N."/>
            <person name="Friedman J."/>
            <person name="Pappas J.G."/>
            <person name="Rabin R."/>
            <person name="Nowak C.B."/>
            <person name="Douglas J."/>
            <person name="Wilson T.E."/>
            <person name="Guillen Sacoto M.J."/>
            <person name="Mullegama S.V."/>
            <person name="Palculict T.B."/>
            <person name="Kirk E.P."/>
            <person name="Pinner J.R."/>
            <person name="Edwards M."/>
            <person name="Montanari F."/>
            <person name="Graziano C."/>
            <person name="Pippucci T."/>
            <person name="Dingmann B."/>
            <person name="Glass I."/>
            <person name="Mefford H.C."/>
            <person name="Shimoji T."/>
            <person name="Suzuki T."/>
            <person name="Yamakawa K."/>
            <person name="Streff H."/>
            <person name="Schaaf C.P."/>
            <person name="Slavotinek A.M."/>
            <person name="Voineagu I."/>
            <person name="Carey J.C."/>
            <person name="Buckley M.F."/>
            <person name="Schenck A."/>
            <person name="Harvey R.J."/>
            <person name="Roscioli T."/>
        </authorList>
    </citation>
    <scope>INTERACTION WITH ZMYND8</scope>
</reference>
<reference evidence="17" key="24">
    <citation type="journal article" date="2017" name="Structure">
        <title>The Structure of the ZMYND8/Drebrin Complex Suggests a Cytoplasmic Sequestering Mechanism of ZMYND8 by Drebrin.</title>
        <authorList>
            <person name="Yao N."/>
            <person name="Li J."/>
            <person name="Liu H."/>
            <person name="Wan J."/>
            <person name="Liu W."/>
            <person name="Zhang M."/>
        </authorList>
    </citation>
    <scope>X-RAY CRYSTALLOGRAPHY (2.68 ANGSTROMS) OF 1-135 IN COMPLEX WITH ZMYND8</scope>
    <scope>SUBCELLULAR LOCATION</scope>
    <scope>MUTAGENESIS OF ARG-10 AND CYS-96</scope>
</reference>
<reference key="25">
    <citation type="journal article" date="2006" name="Science">
        <title>The consensus coding sequences of human breast and colorectal cancers.</title>
        <authorList>
            <person name="Sjoeblom T."/>
            <person name="Jones S."/>
            <person name="Wood L.D."/>
            <person name="Parsons D.W."/>
            <person name="Lin J."/>
            <person name="Barber T.D."/>
            <person name="Mandelker D."/>
            <person name="Leary R.J."/>
            <person name="Ptak J."/>
            <person name="Silliman N."/>
            <person name="Szabo S."/>
            <person name="Buckhaults P."/>
            <person name="Farrell C."/>
            <person name="Meeh P."/>
            <person name="Markowitz S.D."/>
            <person name="Willis J."/>
            <person name="Dawson D."/>
            <person name="Willson J.K.V."/>
            <person name="Gazdar A.F."/>
            <person name="Hartigan J."/>
            <person name="Wu L."/>
            <person name="Liu C."/>
            <person name="Parmigiani G."/>
            <person name="Park B.H."/>
            <person name="Bachman K.E."/>
            <person name="Papadopoulos N."/>
            <person name="Vogelstein B."/>
            <person name="Kinzler K.W."/>
            <person name="Velculescu V.E."/>
        </authorList>
    </citation>
    <scope>VARIANTS [LARGE SCALE ANALYSIS] LYS-278 AND GLN-640</scope>
</reference>
<keyword id="KW-0002">3D-structure</keyword>
<keyword id="KW-0007">Acetylation</keyword>
<keyword id="KW-0009">Actin-binding</keyword>
<keyword id="KW-0025">Alternative splicing</keyword>
<keyword id="KW-0026">Alzheimer disease</keyword>
<keyword id="KW-1008">Amyloidosis</keyword>
<keyword id="KW-0965">Cell junction</keyword>
<keyword id="KW-0966">Cell projection</keyword>
<keyword id="KW-0963">Cytoplasm</keyword>
<keyword id="KW-0217">Developmental protein</keyword>
<keyword id="KW-0221">Differentiation</keyword>
<keyword id="KW-0903">Direct protein sequencing</keyword>
<keyword id="KW-0523">Neurodegeneration</keyword>
<keyword id="KW-0524">Neurogenesis</keyword>
<keyword id="KW-0597">Phosphoprotein</keyword>
<keyword id="KW-1267">Proteomics identification</keyword>
<keyword id="KW-1185">Reference proteome</keyword>